<accession>P9WHT8</accession>
<accession>L0T8V8</accession>
<accession>O33245</accession>
<accession>Q7D7I2</accession>
<sequence>MTWPLPDRLSINSLSGTPAVDLSSFTDFLRRQAPELLPASISGGAPLAGGDAQLPHGTTIVALKYPGGVVMAGDRRSTQGNMISGRDVRKVYITDDYTATGIAGTAAVAVEFARLYAVELEHYEKLEGVPLTFAGKINRLAIMVRGNLAAAMQGLLALPLLAGYDIHASDPQSAGRIVSFDAAGGWNIEEEGYQAVGSGSLFAKSSMKKLYSQVTDGDSGLRVAVEALYDAADDDSATGGPDLVRGIFPTAVIIDADGAVDVPESRIAELARAIIESRSGADTFGSDGGEK</sequence>
<evidence type="ECO:0000255" key="1">
    <source>
        <dbReference type="HAMAP-Rule" id="MF_02113"/>
    </source>
</evidence>
<gene>
    <name evidence="1" type="primary">prcB</name>
    <name type="ordered locus">MT2170</name>
</gene>
<reference key="1">
    <citation type="journal article" date="2002" name="J. Bacteriol.">
        <title>Whole-genome comparison of Mycobacterium tuberculosis clinical and laboratory strains.</title>
        <authorList>
            <person name="Fleischmann R.D."/>
            <person name="Alland D."/>
            <person name="Eisen J.A."/>
            <person name="Carpenter L."/>
            <person name="White O."/>
            <person name="Peterson J.D."/>
            <person name="DeBoy R.T."/>
            <person name="Dodson R.J."/>
            <person name="Gwinn M.L."/>
            <person name="Haft D.H."/>
            <person name="Hickey E.K."/>
            <person name="Kolonay J.F."/>
            <person name="Nelson W.C."/>
            <person name="Umayam L.A."/>
            <person name="Ermolaeva M.D."/>
            <person name="Salzberg S.L."/>
            <person name="Delcher A."/>
            <person name="Utterback T.R."/>
            <person name="Weidman J.F."/>
            <person name="Khouri H.M."/>
            <person name="Gill J."/>
            <person name="Mikula A."/>
            <person name="Bishai W."/>
            <person name="Jacobs W.R. Jr."/>
            <person name="Venter J.C."/>
            <person name="Fraser C.M."/>
        </authorList>
    </citation>
    <scope>NUCLEOTIDE SEQUENCE [LARGE SCALE GENOMIC DNA]</scope>
    <source>
        <strain>CDC 1551 / Oshkosh</strain>
    </source>
</reference>
<proteinExistence type="inferred from homology"/>
<comment type="function">
    <text evidence="1">Component of the proteasome core, a large protease complex with broad specificity involved in protein degradation.</text>
</comment>
<comment type="catalytic activity">
    <reaction evidence="1">
        <text>Cleavage of peptide bonds with very broad specificity.</text>
        <dbReference type="EC" id="3.4.25.1"/>
    </reaction>
</comment>
<comment type="activity regulation">
    <text evidence="1">The formation of the proteasomal ATPase ARC-20S proteasome complex, likely via the docking of the C-termini of ARC into the intersubunit pockets in the alpha-rings, may trigger opening of the gate for substrate entry. Interconversion between the open-gate and close-gate conformations leads to a dynamic regulation of the 20S proteasome proteolysis activity.</text>
</comment>
<comment type="pathway">
    <text evidence="1">Protein degradation; proteasomal Pup-dependent pathway.</text>
</comment>
<comment type="subunit">
    <text evidence="1">The 20S proteasome core is composed of 14 alpha and 14 beta subunits that assemble into four stacked heptameric rings, resulting in a barrel-shaped structure. The two inner rings, each composed of seven catalytic beta subunits, are sandwiched by two outer rings, each composed of seven alpha subunits. The catalytic chamber with the active sites is on the inside of the barrel. Has a gated structure, the ends of the cylinder being occluded by the N-termini of the alpha-subunits. Is capped by the proteasome-associated ATPase, ARC.</text>
</comment>
<comment type="subcellular location">
    <subcellularLocation>
        <location evidence="1">Cytoplasm</location>
    </subcellularLocation>
</comment>
<comment type="similarity">
    <text evidence="1">Belongs to the peptidase T1B family.</text>
</comment>
<protein>
    <recommendedName>
        <fullName evidence="1">Proteasome subunit beta</fullName>
        <ecNumber evidence="1">3.4.25.1</ecNumber>
    </recommendedName>
    <alternativeName>
        <fullName evidence="1">20S proteasome beta subunit</fullName>
    </alternativeName>
    <alternativeName>
        <fullName evidence="1">Proteasome core protein PrcB</fullName>
    </alternativeName>
</protein>
<dbReference type="EC" id="3.4.25.1" evidence="1"/>
<dbReference type="EMBL" id="AE000516">
    <property type="protein sequence ID" value="AAK46453.1"/>
    <property type="molecule type" value="Genomic_DNA"/>
</dbReference>
<dbReference type="PIR" id="A70512">
    <property type="entry name" value="A70512"/>
</dbReference>
<dbReference type="RefSeq" id="WP_003411023.1">
    <property type="nucleotide sequence ID" value="NZ_KK341227.1"/>
</dbReference>
<dbReference type="SMR" id="P9WHT8"/>
<dbReference type="MEROPS" id="T01.005"/>
<dbReference type="KEGG" id="mtc:MT2170"/>
<dbReference type="PATRIC" id="fig|83331.31.peg.2340"/>
<dbReference type="HOGENOM" id="CLU_035750_2_0_11"/>
<dbReference type="UniPathway" id="UPA00997"/>
<dbReference type="Proteomes" id="UP000001020">
    <property type="component" value="Chromosome"/>
</dbReference>
<dbReference type="GO" id="GO:0005737">
    <property type="term" value="C:cytoplasm"/>
    <property type="evidence" value="ECO:0007669"/>
    <property type="project" value="UniProtKB-SubCell"/>
</dbReference>
<dbReference type="GO" id="GO:0019774">
    <property type="term" value="C:proteasome core complex, beta-subunit complex"/>
    <property type="evidence" value="ECO:0007669"/>
    <property type="project" value="UniProtKB-UniRule"/>
</dbReference>
<dbReference type="GO" id="GO:0004298">
    <property type="term" value="F:threonine-type endopeptidase activity"/>
    <property type="evidence" value="ECO:0007669"/>
    <property type="project" value="UniProtKB-UniRule"/>
</dbReference>
<dbReference type="GO" id="GO:0019941">
    <property type="term" value="P:modification-dependent protein catabolic process"/>
    <property type="evidence" value="ECO:0007669"/>
    <property type="project" value="UniProtKB-UniRule"/>
</dbReference>
<dbReference type="GO" id="GO:0010498">
    <property type="term" value="P:proteasomal protein catabolic process"/>
    <property type="evidence" value="ECO:0007669"/>
    <property type="project" value="UniProtKB-UniRule"/>
</dbReference>
<dbReference type="CDD" id="cd01906">
    <property type="entry name" value="proteasome_protease_HslV"/>
    <property type="match status" value="1"/>
</dbReference>
<dbReference type="FunFam" id="3.60.20.10:FF:000046">
    <property type="entry name" value="Proteasome subunit beta"/>
    <property type="match status" value="1"/>
</dbReference>
<dbReference type="Gene3D" id="3.60.20.10">
    <property type="entry name" value="Glutamine Phosphoribosylpyrophosphate, subunit 1, domain 1"/>
    <property type="match status" value="1"/>
</dbReference>
<dbReference type="HAMAP" id="MF_02113_B">
    <property type="entry name" value="Proteasome_B_B"/>
    <property type="match status" value="1"/>
</dbReference>
<dbReference type="InterPro" id="IPR029055">
    <property type="entry name" value="Ntn_hydrolases_N"/>
</dbReference>
<dbReference type="InterPro" id="IPR001353">
    <property type="entry name" value="Proteasome_sua/b"/>
</dbReference>
<dbReference type="InterPro" id="IPR023333">
    <property type="entry name" value="Proteasome_suB-type"/>
</dbReference>
<dbReference type="InterPro" id="IPR022483">
    <property type="entry name" value="PSB_actinobac"/>
</dbReference>
<dbReference type="NCBIfam" id="TIGR03690">
    <property type="entry name" value="20S_bact_beta"/>
    <property type="match status" value="1"/>
</dbReference>
<dbReference type="PANTHER" id="PTHR32194:SF0">
    <property type="entry name" value="ATP-DEPENDENT PROTEASE SUBUNIT HSLV"/>
    <property type="match status" value="1"/>
</dbReference>
<dbReference type="PANTHER" id="PTHR32194">
    <property type="entry name" value="METALLOPROTEASE TLDD"/>
    <property type="match status" value="1"/>
</dbReference>
<dbReference type="Pfam" id="PF00227">
    <property type="entry name" value="Proteasome"/>
    <property type="match status" value="1"/>
</dbReference>
<dbReference type="SUPFAM" id="SSF56235">
    <property type="entry name" value="N-terminal nucleophile aminohydrolases (Ntn hydrolases)"/>
    <property type="match status" value="1"/>
</dbReference>
<dbReference type="PROSITE" id="PS51476">
    <property type="entry name" value="PROTEASOME_BETA_2"/>
    <property type="match status" value="1"/>
</dbReference>
<organism>
    <name type="scientific">Mycobacterium tuberculosis (strain CDC 1551 / Oshkosh)</name>
    <dbReference type="NCBI Taxonomy" id="83331"/>
    <lineage>
        <taxon>Bacteria</taxon>
        <taxon>Bacillati</taxon>
        <taxon>Actinomycetota</taxon>
        <taxon>Actinomycetes</taxon>
        <taxon>Mycobacteriales</taxon>
        <taxon>Mycobacteriaceae</taxon>
        <taxon>Mycobacterium</taxon>
        <taxon>Mycobacterium tuberculosis complex</taxon>
    </lineage>
</organism>
<name>PSB_MYCTO</name>
<keyword id="KW-0068">Autocatalytic cleavage</keyword>
<keyword id="KW-0963">Cytoplasm</keyword>
<keyword id="KW-0378">Hydrolase</keyword>
<keyword id="KW-0645">Protease</keyword>
<keyword id="KW-0647">Proteasome</keyword>
<keyword id="KW-1185">Reference proteome</keyword>
<keyword id="KW-0888">Threonine protease</keyword>
<keyword id="KW-0843">Virulence</keyword>
<keyword id="KW-0865">Zymogen</keyword>
<feature type="propeptide" id="PRO_0000428124" description="Removed in mature form; by autocatalysis" evidence="1">
    <location>
        <begin position="1"/>
        <end position="57"/>
    </location>
</feature>
<feature type="chain" id="PRO_0000428125" description="Proteasome subunit beta">
    <location>
        <begin position="58"/>
        <end position="291"/>
    </location>
</feature>
<feature type="active site" description="Nucleophile" evidence="1">
    <location>
        <position position="58"/>
    </location>
</feature>